<sequence length="130" mass="14611">MAKVQYMGTGRRKKSVARVRLVPGEGRVIVNNREIETYFGLETLRVVVNQPLVLTETKDKYDVLVNVHGGGLSGQAGAIRHGISRALLKADENLRPELKKAGFLTRDPRMVERKKCGLKKARRSPQFSKR</sequence>
<feature type="chain" id="PRO_0000111348" description="Small ribosomal subunit protein uS9">
    <location>
        <begin position="1"/>
        <end position="130"/>
    </location>
</feature>
<protein>
    <recommendedName>
        <fullName evidence="1">Small ribosomal subunit protein uS9</fullName>
    </recommendedName>
    <alternativeName>
        <fullName evidence="2">30S ribosomal protein S9</fullName>
    </alternativeName>
</protein>
<reference key="1">
    <citation type="journal article" date="2002" name="Proc. Natl. Acad. Sci. U.S.A.">
        <title>Complete genome sequence of Clostridium perfringens, an anaerobic flesh-eater.</title>
        <authorList>
            <person name="Shimizu T."/>
            <person name="Ohtani K."/>
            <person name="Hirakawa H."/>
            <person name="Ohshima K."/>
            <person name="Yamashita A."/>
            <person name="Shiba T."/>
            <person name="Ogasawara N."/>
            <person name="Hattori M."/>
            <person name="Kuhara S."/>
            <person name="Hayashi H."/>
        </authorList>
    </citation>
    <scope>NUCLEOTIDE SEQUENCE [LARGE SCALE GENOMIC DNA]</scope>
    <source>
        <strain>13 / Type A</strain>
    </source>
</reference>
<accession>Q8XHV7</accession>
<dbReference type="EMBL" id="BA000016">
    <property type="protein sequence ID" value="BAB82075.1"/>
    <property type="molecule type" value="Genomic_DNA"/>
</dbReference>
<dbReference type="RefSeq" id="WP_003454434.1">
    <property type="nucleotide sequence ID" value="NC_003366.1"/>
</dbReference>
<dbReference type="SMR" id="Q8XHV7"/>
<dbReference type="STRING" id="195102.gene:10491686"/>
<dbReference type="GeneID" id="93001045"/>
<dbReference type="KEGG" id="cpe:CPE2369"/>
<dbReference type="HOGENOM" id="CLU_046483_2_1_9"/>
<dbReference type="Proteomes" id="UP000000818">
    <property type="component" value="Chromosome"/>
</dbReference>
<dbReference type="GO" id="GO:0022627">
    <property type="term" value="C:cytosolic small ribosomal subunit"/>
    <property type="evidence" value="ECO:0007669"/>
    <property type="project" value="TreeGrafter"/>
</dbReference>
<dbReference type="GO" id="GO:0003723">
    <property type="term" value="F:RNA binding"/>
    <property type="evidence" value="ECO:0007669"/>
    <property type="project" value="TreeGrafter"/>
</dbReference>
<dbReference type="GO" id="GO:0003735">
    <property type="term" value="F:structural constituent of ribosome"/>
    <property type="evidence" value="ECO:0007669"/>
    <property type="project" value="InterPro"/>
</dbReference>
<dbReference type="GO" id="GO:0006412">
    <property type="term" value="P:translation"/>
    <property type="evidence" value="ECO:0007669"/>
    <property type="project" value="UniProtKB-UniRule"/>
</dbReference>
<dbReference type="FunFam" id="3.30.230.10:FF:000001">
    <property type="entry name" value="30S ribosomal protein S9"/>
    <property type="match status" value="1"/>
</dbReference>
<dbReference type="Gene3D" id="3.30.230.10">
    <property type="match status" value="1"/>
</dbReference>
<dbReference type="HAMAP" id="MF_00532_B">
    <property type="entry name" value="Ribosomal_uS9_B"/>
    <property type="match status" value="1"/>
</dbReference>
<dbReference type="InterPro" id="IPR020568">
    <property type="entry name" value="Ribosomal_Su5_D2-typ_SF"/>
</dbReference>
<dbReference type="InterPro" id="IPR000754">
    <property type="entry name" value="Ribosomal_uS9"/>
</dbReference>
<dbReference type="InterPro" id="IPR023035">
    <property type="entry name" value="Ribosomal_uS9_bac/plastid"/>
</dbReference>
<dbReference type="InterPro" id="IPR020574">
    <property type="entry name" value="Ribosomal_uS9_CS"/>
</dbReference>
<dbReference type="InterPro" id="IPR014721">
    <property type="entry name" value="Ribsml_uS5_D2-typ_fold_subgr"/>
</dbReference>
<dbReference type="NCBIfam" id="NF001099">
    <property type="entry name" value="PRK00132.1"/>
    <property type="match status" value="1"/>
</dbReference>
<dbReference type="PANTHER" id="PTHR21569">
    <property type="entry name" value="RIBOSOMAL PROTEIN S9"/>
    <property type="match status" value="1"/>
</dbReference>
<dbReference type="PANTHER" id="PTHR21569:SF1">
    <property type="entry name" value="SMALL RIBOSOMAL SUBUNIT PROTEIN US9M"/>
    <property type="match status" value="1"/>
</dbReference>
<dbReference type="Pfam" id="PF00380">
    <property type="entry name" value="Ribosomal_S9"/>
    <property type="match status" value="1"/>
</dbReference>
<dbReference type="SUPFAM" id="SSF54211">
    <property type="entry name" value="Ribosomal protein S5 domain 2-like"/>
    <property type="match status" value="1"/>
</dbReference>
<dbReference type="PROSITE" id="PS00360">
    <property type="entry name" value="RIBOSOMAL_S9"/>
    <property type="match status" value="1"/>
</dbReference>
<proteinExistence type="inferred from homology"/>
<name>RS9_CLOPE</name>
<organism>
    <name type="scientific">Clostridium perfringens (strain 13 / Type A)</name>
    <dbReference type="NCBI Taxonomy" id="195102"/>
    <lineage>
        <taxon>Bacteria</taxon>
        <taxon>Bacillati</taxon>
        <taxon>Bacillota</taxon>
        <taxon>Clostridia</taxon>
        <taxon>Eubacteriales</taxon>
        <taxon>Clostridiaceae</taxon>
        <taxon>Clostridium</taxon>
    </lineage>
</organism>
<evidence type="ECO:0000255" key="1">
    <source>
        <dbReference type="HAMAP-Rule" id="MF_00532"/>
    </source>
</evidence>
<evidence type="ECO:0000305" key="2"/>
<comment type="similarity">
    <text evidence="1">Belongs to the universal ribosomal protein uS9 family.</text>
</comment>
<keyword id="KW-1185">Reference proteome</keyword>
<keyword id="KW-0687">Ribonucleoprotein</keyword>
<keyword id="KW-0689">Ribosomal protein</keyword>
<gene>
    <name evidence="1" type="primary">rpsI</name>
    <name type="ordered locus">CPE2369</name>
</gene>